<protein>
    <recommendedName>
        <fullName>Putative 8-amino-7-oxononanoate synthase</fullName>
        <shortName>AONS</shortName>
        <ecNumber>2.3.1.47</ecNumber>
    </recommendedName>
    <alternativeName>
        <fullName>7-keto-8-amino-pelargonic acid synthase</fullName>
        <shortName>7-KAP synthase</shortName>
    </alternativeName>
    <alternativeName>
        <fullName>8-amino-7-ketopelargonate synthase</fullName>
    </alternativeName>
</protein>
<comment type="function">
    <text evidence="1">Catalyzes the decarboxylative condensation of pimeloyl-[acyl-carrier protein] and L-alanine to produce 8-amino-7-oxononanoate (AON), [acyl-carrier protein], and carbon dioxide.</text>
</comment>
<comment type="catalytic activity">
    <reaction>
        <text>6-carboxyhexanoyl-[ACP] + L-alanine + H(+) = (8S)-8-amino-7-oxononanoate + holo-[ACP] + CO2</text>
        <dbReference type="Rhea" id="RHEA:42288"/>
        <dbReference type="Rhea" id="RHEA-COMP:9685"/>
        <dbReference type="Rhea" id="RHEA-COMP:9955"/>
        <dbReference type="ChEBI" id="CHEBI:15378"/>
        <dbReference type="ChEBI" id="CHEBI:16526"/>
        <dbReference type="ChEBI" id="CHEBI:57972"/>
        <dbReference type="ChEBI" id="CHEBI:64479"/>
        <dbReference type="ChEBI" id="CHEBI:78846"/>
        <dbReference type="ChEBI" id="CHEBI:149468"/>
        <dbReference type="EC" id="2.3.1.47"/>
    </reaction>
</comment>
<comment type="cofactor">
    <cofactor evidence="1">
        <name>pyridoxal 5'-phosphate</name>
        <dbReference type="ChEBI" id="CHEBI:597326"/>
    </cofactor>
</comment>
<comment type="pathway">
    <text>Cofactor biosynthesis; biotin biosynthesis.</text>
</comment>
<comment type="subunit">
    <text evidence="1">Homodimer.</text>
</comment>
<comment type="similarity">
    <text evidence="2">Belongs to the class-II pyridoxal-phosphate-dependent aminotransferase family. BioF subfamily.</text>
</comment>
<keyword id="KW-0093">Biotin biosynthesis</keyword>
<keyword id="KW-0663">Pyridoxal phosphate</keyword>
<keyword id="KW-1185">Reference proteome</keyword>
<keyword id="KW-0808">Transferase</keyword>
<proteinExistence type="inferred from homology"/>
<accession>Q8DJ97</accession>
<organism>
    <name type="scientific">Thermosynechococcus vestitus (strain NIES-2133 / IAM M-273 / BP-1)</name>
    <dbReference type="NCBI Taxonomy" id="197221"/>
    <lineage>
        <taxon>Bacteria</taxon>
        <taxon>Bacillati</taxon>
        <taxon>Cyanobacteriota</taxon>
        <taxon>Cyanophyceae</taxon>
        <taxon>Acaryochloridales</taxon>
        <taxon>Thermosynechococcaceae</taxon>
        <taxon>Thermosynechococcus</taxon>
    </lineage>
</organism>
<name>BIOF_THEVB</name>
<evidence type="ECO:0000250" key="1"/>
<evidence type="ECO:0000305" key="2"/>
<feature type="chain" id="PRO_0000381121" description="Putative 8-amino-7-oxononanoate synthase">
    <location>
        <begin position="1"/>
        <end position="391"/>
    </location>
</feature>
<feature type="binding site" evidence="1">
    <location>
        <position position="22"/>
    </location>
    <ligand>
        <name>substrate</name>
    </ligand>
</feature>
<feature type="binding site" evidence="1">
    <location>
        <position position="135"/>
    </location>
    <ligand>
        <name>substrate</name>
    </ligand>
</feature>
<feature type="binding site" evidence="1">
    <location>
        <position position="183"/>
    </location>
    <ligand>
        <name>pyridoxal 5'-phosphate</name>
        <dbReference type="ChEBI" id="CHEBI:597326"/>
    </ligand>
</feature>
<feature type="binding site" evidence="1">
    <location>
        <begin position="208"/>
        <end position="211"/>
    </location>
    <ligand>
        <name>pyridoxal 5'-phosphate</name>
        <dbReference type="ChEBI" id="CHEBI:597326"/>
    </ligand>
</feature>
<feature type="binding site" evidence="1">
    <location>
        <begin position="239"/>
        <end position="242"/>
    </location>
    <ligand>
        <name>pyridoxal 5'-phosphate</name>
        <dbReference type="ChEBI" id="CHEBI:597326"/>
    </ligand>
</feature>
<feature type="binding site" evidence="1">
    <location>
        <position position="358"/>
    </location>
    <ligand>
        <name>substrate</name>
    </ligand>
</feature>
<feature type="modified residue" description="N6-(pyridoxal phosphate)lysine" evidence="1">
    <location>
        <position position="242"/>
    </location>
</feature>
<reference key="1">
    <citation type="journal article" date="2002" name="DNA Res.">
        <title>Complete genome structure of the thermophilic cyanobacterium Thermosynechococcus elongatus BP-1.</title>
        <authorList>
            <person name="Nakamura Y."/>
            <person name="Kaneko T."/>
            <person name="Sato S."/>
            <person name="Ikeuchi M."/>
            <person name="Katoh H."/>
            <person name="Sasamoto S."/>
            <person name="Watanabe A."/>
            <person name="Iriguchi M."/>
            <person name="Kawashima K."/>
            <person name="Kimura T."/>
            <person name="Kishida Y."/>
            <person name="Kiyokawa C."/>
            <person name="Kohara M."/>
            <person name="Matsumoto M."/>
            <person name="Matsuno A."/>
            <person name="Nakazaki N."/>
            <person name="Shimpo S."/>
            <person name="Sugimoto M."/>
            <person name="Takeuchi C."/>
            <person name="Yamada M."/>
            <person name="Tabata S."/>
        </authorList>
    </citation>
    <scope>NUCLEOTIDE SEQUENCE [LARGE SCALE GENOMIC DNA]</scope>
    <source>
        <strain>NIES-2133 / IAM M-273 / BP-1</strain>
    </source>
</reference>
<sequence>MRDPFDWLDPALDALHRAHWYRQPLLSGTPAAVVSVGEPPRPLINFCSNDYLGLANHPQVKAAAIAAIQQWGTGATGSRLLSGQRHLHAQLERAIAQWKGTEAALVFSSGTAANLGTIAALVDQRDLVLGDAYNHACLKKGARLSHATFYEYPHNNVAALAQLLETHRSQYRRCLILTDGVFSMDGDVAPLAKILALAEAYTAMVLVDDAHGTGVLGTNGAGTLAALGQSSPTIIQMGTLSKALGSLGGYIAGCQALITYLQHRASTWIYSTGLSPADAAAALAALEQLQTDPSLRQALGDRIQQLEKGLQALGCPVLPRPLPTPIFCLPAPDPATVLQWGQELQEAGCWVAAVRPPTVPFSRLRITLRADHTPGHIEQLLAALAALLKCC</sequence>
<gene>
    <name type="primary">bioF</name>
    <name type="ordered locus">tlr1331</name>
</gene>
<dbReference type="EC" id="2.3.1.47"/>
<dbReference type="EMBL" id="BA000039">
    <property type="protein sequence ID" value="BAC08883.1"/>
    <property type="molecule type" value="Genomic_DNA"/>
</dbReference>
<dbReference type="RefSeq" id="NP_682121.1">
    <property type="nucleotide sequence ID" value="NC_004113.1"/>
</dbReference>
<dbReference type="RefSeq" id="WP_011057171.1">
    <property type="nucleotide sequence ID" value="NC_004113.1"/>
</dbReference>
<dbReference type="SMR" id="Q8DJ97"/>
<dbReference type="STRING" id="197221.gene:10747929"/>
<dbReference type="EnsemblBacteria" id="BAC08883">
    <property type="protein sequence ID" value="BAC08883"/>
    <property type="gene ID" value="BAC08883"/>
</dbReference>
<dbReference type="KEGG" id="tel:tlr1331"/>
<dbReference type="PATRIC" id="fig|197221.4.peg.1399"/>
<dbReference type="eggNOG" id="COG0156">
    <property type="taxonomic scope" value="Bacteria"/>
</dbReference>
<dbReference type="UniPathway" id="UPA00078"/>
<dbReference type="Proteomes" id="UP000000440">
    <property type="component" value="Chromosome"/>
</dbReference>
<dbReference type="GO" id="GO:0008710">
    <property type="term" value="F:8-amino-7-oxononanoate synthase activity"/>
    <property type="evidence" value="ECO:0007669"/>
    <property type="project" value="UniProtKB-EC"/>
</dbReference>
<dbReference type="GO" id="GO:0030170">
    <property type="term" value="F:pyridoxal phosphate binding"/>
    <property type="evidence" value="ECO:0007669"/>
    <property type="project" value="InterPro"/>
</dbReference>
<dbReference type="GO" id="GO:0009102">
    <property type="term" value="P:biotin biosynthetic process"/>
    <property type="evidence" value="ECO:0007669"/>
    <property type="project" value="UniProtKB-UniPathway"/>
</dbReference>
<dbReference type="Gene3D" id="3.90.1150.10">
    <property type="entry name" value="Aspartate Aminotransferase, domain 1"/>
    <property type="match status" value="1"/>
</dbReference>
<dbReference type="Gene3D" id="3.40.640.10">
    <property type="entry name" value="Type I PLP-dependent aspartate aminotransferase-like (Major domain)"/>
    <property type="match status" value="1"/>
</dbReference>
<dbReference type="InterPro" id="IPR001917">
    <property type="entry name" value="Aminotrans_II_pyridoxalP_BS"/>
</dbReference>
<dbReference type="InterPro" id="IPR004839">
    <property type="entry name" value="Aminotransferase_I/II_large"/>
</dbReference>
<dbReference type="InterPro" id="IPR050087">
    <property type="entry name" value="AON_synthase_class-II"/>
</dbReference>
<dbReference type="InterPro" id="IPR004723">
    <property type="entry name" value="AONS_Archaea/Proteobacteria"/>
</dbReference>
<dbReference type="InterPro" id="IPR015424">
    <property type="entry name" value="PyrdxlP-dep_Trfase"/>
</dbReference>
<dbReference type="InterPro" id="IPR015421">
    <property type="entry name" value="PyrdxlP-dep_Trfase_major"/>
</dbReference>
<dbReference type="InterPro" id="IPR015422">
    <property type="entry name" value="PyrdxlP-dep_Trfase_small"/>
</dbReference>
<dbReference type="NCBIfam" id="TIGR00858">
    <property type="entry name" value="bioF"/>
    <property type="match status" value="1"/>
</dbReference>
<dbReference type="PANTHER" id="PTHR13693:SF100">
    <property type="entry name" value="8-AMINO-7-OXONONANOATE SYNTHASE"/>
    <property type="match status" value="1"/>
</dbReference>
<dbReference type="PANTHER" id="PTHR13693">
    <property type="entry name" value="CLASS II AMINOTRANSFERASE/8-AMINO-7-OXONONANOATE SYNTHASE"/>
    <property type="match status" value="1"/>
</dbReference>
<dbReference type="Pfam" id="PF00155">
    <property type="entry name" value="Aminotran_1_2"/>
    <property type="match status" value="1"/>
</dbReference>
<dbReference type="SUPFAM" id="SSF53383">
    <property type="entry name" value="PLP-dependent transferases"/>
    <property type="match status" value="1"/>
</dbReference>
<dbReference type="PROSITE" id="PS00599">
    <property type="entry name" value="AA_TRANSFER_CLASS_2"/>
    <property type="match status" value="1"/>
</dbReference>